<protein>
    <recommendedName>
        <fullName evidence="1">tRNA pseudouridine synthase A</fullName>
        <ecNumber evidence="1">5.4.99.12</ecNumber>
    </recommendedName>
    <alternativeName>
        <fullName evidence="1">tRNA pseudouridine(38-40) synthase</fullName>
    </alternativeName>
    <alternativeName>
        <fullName evidence="1">tRNA pseudouridylate synthase I</fullName>
    </alternativeName>
    <alternativeName>
        <fullName evidence="1">tRNA-uridine isomerase I</fullName>
    </alternativeName>
</protein>
<proteinExistence type="inferred from homology"/>
<comment type="function">
    <text evidence="1">Formation of pseudouridine at positions 38, 39 and 40 in the anticodon stem and loop of transfer RNAs.</text>
</comment>
<comment type="catalytic activity">
    <reaction evidence="1">
        <text>uridine(38/39/40) in tRNA = pseudouridine(38/39/40) in tRNA</text>
        <dbReference type="Rhea" id="RHEA:22376"/>
        <dbReference type="Rhea" id="RHEA-COMP:10085"/>
        <dbReference type="Rhea" id="RHEA-COMP:10087"/>
        <dbReference type="ChEBI" id="CHEBI:65314"/>
        <dbReference type="ChEBI" id="CHEBI:65315"/>
        <dbReference type="EC" id="5.4.99.12"/>
    </reaction>
</comment>
<comment type="subunit">
    <text evidence="1">Homodimer.</text>
</comment>
<comment type="similarity">
    <text evidence="1">Belongs to the tRNA pseudouridine synthase TruA family.</text>
</comment>
<name>TRUA_STRS2</name>
<keyword id="KW-0413">Isomerase</keyword>
<keyword id="KW-0819">tRNA processing</keyword>
<sequence length="249" mass="28022">MTRYKAIISYDGHDFSGFQRQPHARTVQEEIEKTLVRLNSGQPVTVHGAGRTDAGVHAYGQVIHFDLAGSRDVEKLRFALDTQTSEDIDVVSVEQVADDFHCRYAKHSKTYEFLVDIGRPKNPMMRHYATFYPYDLDLSLIEEAIQDLVGTHDFTGFTASGTSVEDKVRTITVASMEYDQQRQFLIFTFSGNGFLYKQVRNMVGTLLKIGNGRMPVGQIKRILAEKDRGLAGPTAAGNGLYLKEIIYED</sequence>
<reference key="1">
    <citation type="journal article" date="2007" name="PLoS ONE">
        <title>A glimpse of streptococcal toxic shock syndrome from comparative genomics of S. suis 2 Chinese isolates.</title>
        <authorList>
            <person name="Chen C."/>
            <person name="Tang J."/>
            <person name="Dong W."/>
            <person name="Wang C."/>
            <person name="Feng Y."/>
            <person name="Wang J."/>
            <person name="Zheng F."/>
            <person name="Pan X."/>
            <person name="Liu D."/>
            <person name="Li M."/>
            <person name="Song Y."/>
            <person name="Zhu X."/>
            <person name="Sun H."/>
            <person name="Feng T."/>
            <person name="Guo Z."/>
            <person name="Ju A."/>
            <person name="Ge J."/>
            <person name="Dong Y."/>
            <person name="Sun W."/>
            <person name="Jiang Y."/>
            <person name="Wang J."/>
            <person name="Yan J."/>
            <person name="Yang H."/>
            <person name="Wang X."/>
            <person name="Gao G.F."/>
            <person name="Yang R."/>
            <person name="Wang J."/>
            <person name="Yu J."/>
        </authorList>
    </citation>
    <scope>NUCLEOTIDE SEQUENCE [LARGE SCALE GENOMIC DNA]</scope>
    <source>
        <strain>98HAH33</strain>
    </source>
</reference>
<dbReference type="EC" id="5.4.99.12" evidence="1"/>
<dbReference type="EMBL" id="CP000408">
    <property type="protein sequence ID" value="ABP91465.1"/>
    <property type="molecule type" value="Genomic_DNA"/>
</dbReference>
<dbReference type="SMR" id="A4VZC6"/>
<dbReference type="KEGG" id="ssv:SSU98_0307"/>
<dbReference type="HOGENOM" id="CLU_014673_0_1_9"/>
<dbReference type="GO" id="GO:0003723">
    <property type="term" value="F:RNA binding"/>
    <property type="evidence" value="ECO:0007669"/>
    <property type="project" value="InterPro"/>
</dbReference>
<dbReference type="GO" id="GO:0160147">
    <property type="term" value="F:tRNA pseudouridine(38-40) synthase activity"/>
    <property type="evidence" value="ECO:0007669"/>
    <property type="project" value="UniProtKB-EC"/>
</dbReference>
<dbReference type="GO" id="GO:0031119">
    <property type="term" value="P:tRNA pseudouridine synthesis"/>
    <property type="evidence" value="ECO:0007669"/>
    <property type="project" value="UniProtKB-UniRule"/>
</dbReference>
<dbReference type="CDD" id="cd02570">
    <property type="entry name" value="PseudoU_synth_EcTruA"/>
    <property type="match status" value="1"/>
</dbReference>
<dbReference type="FunFam" id="3.30.70.580:FF:000001">
    <property type="entry name" value="tRNA pseudouridine synthase A"/>
    <property type="match status" value="1"/>
</dbReference>
<dbReference type="Gene3D" id="3.30.70.660">
    <property type="entry name" value="Pseudouridine synthase I, catalytic domain, C-terminal subdomain"/>
    <property type="match status" value="1"/>
</dbReference>
<dbReference type="Gene3D" id="3.30.70.580">
    <property type="entry name" value="Pseudouridine synthase I, catalytic domain, N-terminal subdomain"/>
    <property type="match status" value="1"/>
</dbReference>
<dbReference type="HAMAP" id="MF_00171">
    <property type="entry name" value="TruA"/>
    <property type="match status" value="1"/>
</dbReference>
<dbReference type="InterPro" id="IPR020103">
    <property type="entry name" value="PsdUridine_synth_cat_dom_sf"/>
</dbReference>
<dbReference type="InterPro" id="IPR001406">
    <property type="entry name" value="PsdUridine_synth_TruA"/>
</dbReference>
<dbReference type="InterPro" id="IPR020097">
    <property type="entry name" value="PsdUridine_synth_TruA_a/b_dom"/>
</dbReference>
<dbReference type="InterPro" id="IPR020095">
    <property type="entry name" value="PsdUridine_synth_TruA_C"/>
</dbReference>
<dbReference type="InterPro" id="IPR020094">
    <property type="entry name" value="TruA/RsuA/RluB/E/F_N"/>
</dbReference>
<dbReference type="NCBIfam" id="TIGR00071">
    <property type="entry name" value="hisT_truA"/>
    <property type="match status" value="1"/>
</dbReference>
<dbReference type="PANTHER" id="PTHR11142">
    <property type="entry name" value="PSEUDOURIDYLATE SYNTHASE"/>
    <property type="match status" value="1"/>
</dbReference>
<dbReference type="PANTHER" id="PTHR11142:SF0">
    <property type="entry name" value="TRNA PSEUDOURIDINE SYNTHASE-LIKE 1"/>
    <property type="match status" value="1"/>
</dbReference>
<dbReference type="Pfam" id="PF01416">
    <property type="entry name" value="PseudoU_synth_1"/>
    <property type="match status" value="2"/>
</dbReference>
<dbReference type="PIRSF" id="PIRSF001430">
    <property type="entry name" value="tRNA_psdUrid_synth"/>
    <property type="match status" value="1"/>
</dbReference>
<dbReference type="SUPFAM" id="SSF55120">
    <property type="entry name" value="Pseudouridine synthase"/>
    <property type="match status" value="1"/>
</dbReference>
<feature type="chain" id="PRO_1000017198" description="tRNA pseudouridine synthase A">
    <location>
        <begin position="1"/>
        <end position="249"/>
    </location>
</feature>
<feature type="active site" description="Nucleophile" evidence="1">
    <location>
        <position position="53"/>
    </location>
</feature>
<feature type="binding site" evidence="1">
    <location>
        <position position="111"/>
    </location>
    <ligand>
        <name>substrate</name>
    </ligand>
</feature>
<gene>
    <name evidence="1" type="primary">truA</name>
    <name type="ordered locus">SSU98_0307</name>
</gene>
<evidence type="ECO:0000255" key="1">
    <source>
        <dbReference type="HAMAP-Rule" id="MF_00171"/>
    </source>
</evidence>
<organism>
    <name type="scientific">Streptococcus suis (strain 98HAH33)</name>
    <dbReference type="NCBI Taxonomy" id="391296"/>
    <lineage>
        <taxon>Bacteria</taxon>
        <taxon>Bacillati</taxon>
        <taxon>Bacillota</taxon>
        <taxon>Bacilli</taxon>
        <taxon>Lactobacillales</taxon>
        <taxon>Streptococcaceae</taxon>
        <taxon>Streptococcus</taxon>
    </lineage>
</organism>
<accession>A4VZC6</accession>